<reference key="1">
    <citation type="journal article" date="2001" name="Lancet">
        <title>Whole genome sequencing of meticillin-resistant Staphylococcus aureus.</title>
        <authorList>
            <person name="Kuroda M."/>
            <person name="Ohta T."/>
            <person name="Uchiyama I."/>
            <person name="Baba T."/>
            <person name="Yuzawa H."/>
            <person name="Kobayashi I."/>
            <person name="Cui L."/>
            <person name="Oguchi A."/>
            <person name="Aoki K."/>
            <person name="Nagai Y."/>
            <person name="Lian J.-Q."/>
            <person name="Ito T."/>
            <person name="Kanamori M."/>
            <person name="Matsumaru H."/>
            <person name="Maruyama A."/>
            <person name="Murakami H."/>
            <person name="Hosoyama A."/>
            <person name="Mizutani-Ui Y."/>
            <person name="Takahashi N.K."/>
            <person name="Sawano T."/>
            <person name="Inoue R."/>
            <person name="Kaito C."/>
            <person name="Sekimizu K."/>
            <person name="Hirakawa H."/>
            <person name="Kuhara S."/>
            <person name="Goto S."/>
            <person name="Yabuzaki J."/>
            <person name="Kanehisa M."/>
            <person name="Yamashita A."/>
            <person name="Oshima K."/>
            <person name="Furuya K."/>
            <person name="Yoshino C."/>
            <person name="Shiba T."/>
            <person name="Hattori M."/>
            <person name="Ogasawara N."/>
            <person name="Hayashi H."/>
            <person name="Hiramatsu K."/>
        </authorList>
    </citation>
    <scope>NUCLEOTIDE SEQUENCE [LARGE SCALE GENOMIC DNA]</scope>
    <source>
        <strain>N315</strain>
    </source>
</reference>
<accession>Q7A767</accession>
<proteinExistence type="predicted"/>
<name>VRAC_STAAN</name>
<organism>
    <name type="scientific">Staphylococcus aureus (strain N315)</name>
    <dbReference type="NCBI Taxonomy" id="158879"/>
    <lineage>
        <taxon>Bacteria</taxon>
        <taxon>Bacillati</taxon>
        <taxon>Bacillota</taxon>
        <taxon>Bacilli</taxon>
        <taxon>Bacillales</taxon>
        <taxon>Staphylococcaceae</taxon>
        <taxon>Staphylococcus</taxon>
    </lineage>
</organism>
<dbReference type="EMBL" id="BA000018">
    <property type="protein sequence ID" value="BAB41766.1"/>
    <property type="molecule type" value="Genomic_DNA"/>
</dbReference>
<dbReference type="RefSeq" id="WP_001165058.1">
    <property type="nucleotide sequence ID" value="NC_002745.2"/>
</dbReference>
<dbReference type="SMR" id="Q7A767"/>
<dbReference type="EnsemblBacteria" id="BAB41766">
    <property type="protein sequence ID" value="BAB41766"/>
    <property type="gene ID" value="BAB41766"/>
</dbReference>
<dbReference type="KEGG" id="sau:SA0535"/>
<dbReference type="HOGENOM" id="CLU_2195295_0_0_9"/>
<dbReference type="InterPro" id="IPR016994">
    <property type="entry name" value="UCP032370_VraC"/>
</dbReference>
<dbReference type="PIRSF" id="PIRSF032370">
    <property type="entry name" value="UCP032370_VraC"/>
    <property type="match status" value="1"/>
</dbReference>
<sequence length="121" mass="14187">MQHYLLDSNQRLNVSFSKDSVAAYYQCFNQPYRKEVPPLMCASLWPKFDLFKKYANSELILTKSAINQTQKIEVDTIYVGHLEDIECRQTRNITRYTMALTLTKNDQHVITVTQTFIKAMK</sequence>
<gene>
    <name type="primary">vraC</name>
    <name type="ordered locus">SA0535</name>
</gene>
<protein>
    <recommendedName>
        <fullName>Protein VraC</fullName>
    </recommendedName>
</protein>
<feature type="chain" id="PRO_0000065912" description="Protein VraC">
    <location>
        <begin position="1"/>
        <end position="121"/>
    </location>
</feature>